<comment type="function">
    <text>Probable pathogen-recognition receptor. May recognize in a calcium-dependent manner high mannose N-linked oligosaccharides in a variety of pathogen antigens.</text>
</comment>
<comment type="caution">
    <text evidence="4">In mouse, 5 genes homologous to human CD209/DC-SIGN and CD209L/DC-SIGNR have been identified.</text>
</comment>
<comment type="online information" name="Functional Glycomics Gateway - Glycan Binding">
    <link uri="http://www.functionalglycomics.org/glycomics/GBPServlet?&amp;operationType=view&amp;cbpId=cbp_mou_Ctlect_163"/>
    <text>SIGNR2</text>
</comment>
<proteinExistence type="evidence at transcript level"/>
<feature type="chain" id="PRO_0000046606" description="CD209 antigen-like protein C">
    <location>
        <begin position="1"/>
        <end position="178"/>
    </location>
</feature>
<feature type="domain" description="C-type lectin" evidence="3">
    <location>
        <begin position="54"/>
        <end position="169"/>
    </location>
</feature>
<feature type="binding site" evidence="1">
    <location>
        <position position="138"/>
    </location>
    <ligand>
        <name>Ca(2+)</name>
        <dbReference type="ChEBI" id="CHEBI:29108"/>
    </ligand>
</feature>
<feature type="binding site" evidence="1">
    <location>
        <position position="140"/>
    </location>
    <ligand>
        <name>Ca(2+)</name>
        <dbReference type="ChEBI" id="CHEBI:29108"/>
    </ligand>
</feature>
<feature type="binding site" evidence="1">
    <location>
        <position position="145"/>
    </location>
    <ligand>
        <name>Ca(2+)</name>
        <dbReference type="ChEBI" id="CHEBI:29108"/>
    </ligand>
</feature>
<feature type="binding site" evidence="1">
    <location>
        <position position="156"/>
    </location>
    <ligand>
        <name>Ca(2+)</name>
        <dbReference type="ChEBI" id="CHEBI:29108"/>
    </ligand>
</feature>
<feature type="binding site" evidence="1">
    <location>
        <position position="157"/>
    </location>
    <ligand>
        <name>Ca(2+)</name>
        <dbReference type="ChEBI" id="CHEBI:29108"/>
    </ligand>
</feature>
<feature type="glycosylation site" description="N-linked (GlcNAc...) asparagine" evidence="2">
    <location>
        <position position="70"/>
    </location>
</feature>
<feature type="disulfide bond" evidence="3">
    <location>
        <begin position="48"/>
        <end position="59"/>
    </location>
</feature>
<feature type="disulfide bond" evidence="3">
    <location>
        <begin position="76"/>
        <end position="168"/>
    </location>
</feature>
<feature type="disulfide bond" evidence="3">
    <location>
        <begin position="147"/>
        <end position="160"/>
    </location>
</feature>
<reference key="1">
    <citation type="journal article" date="2001" name="Int. Immunol.">
        <title>Five mouse homologues of the human dendritic cell C-type lectin, DC-SIGN.</title>
        <authorList>
            <person name="Park C.G."/>
            <person name="Takahara K."/>
            <person name="Umemoto E."/>
            <person name="Yashima Y."/>
            <person name="Matsubara K."/>
            <person name="Matsuda Y."/>
            <person name="Clausen B.E."/>
            <person name="Inaba K."/>
            <person name="Steinman R.M."/>
        </authorList>
    </citation>
    <scope>NUCLEOTIDE SEQUENCE [MRNA]</scope>
    <source>
        <strain>C57BL/6J</strain>
    </source>
</reference>
<reference key="2">
    <citation type="journal article" date="2004" name="Genome Res.">
        <title>The status, quality, and expansion of the NIH full-length cDNA project: the Mammalian Gene Collection (MGC).</title>
        <authorList>
            <consortium name="The MGC Project Team"/>
        </authorList>
    </citation>
    <scope>NUCLEOTIDE SEQUENCE [LARGE SCALE MRNA]</scope>
    <source>
        <tissue>Brain</tissue>
    </source>
</reference>
<name>C209C_MOUSE</name>
<gene>
    <name type="primary">Cd209c</name>
</gene>
<organism>
    <name type="scientific">Mus musculus</name>
    <name type="common">Mouse</name>
    <dbReference type="NCBI Taxonomy" id="10090"/>
    <lineage>
        <taxon>Eukaryota</taxon>
        <taxon>Metazoa</taxon>
        <taxon>Chordata</taxon>
        <taxon>Craniata</taxon>
        <taxon>Vertebrata</taxon>
        <taxon>Euteleostomi</taxon>
        <taxon>Mammalia</taxon>
        <taxon>Eutheria</taxon>
        <taxon>Euarchontoglires</taxon>
        <taxon>Glires</taxon>
        <taxon>Rodentia</taxon>
        <taxon>Myomorpha</taxon>
        <taxon>Muroidea</taxon>
        <taxon>Muridae</taxon>
        <taxon>Murinae</taxon>
        <taxon>Mus</taxon>
        <taxon>Mus</taxon>
    </lineage>
</organism>
<keyword id="KW-0106">Calcium</keyword>
<keyword id="KW-1015">Disulfide bond</keyword>
<keyword id="KW-0325">Glycoprotein</keyword>
<keyword id="KW-0430">Lectin</keyword>
<keyword id="KW-0465">Mannose-binding</keyword>
<keyword id="KW-0479">Metal-binding</keyword>
<keyword id="KW-0675">Receptor</keyword>
<keyword id="KW-1185">Reference proteome</keyword>
<protein>
    <recommendedName>
        <fullName>CD209 antigen-like protein C</fullName>
    </recommendedName>
    <alternativeName>
        <fullName>DC-SIGN-related protein 2</fullName>
        <shortName>DC-SIGNR2</shortName>
    </alternativeName>
    <cdAntigenName>CD209</cdAntigenName>
</protein>
<dbReference type="EMBL" id="AF373410">
    <property type="protein sequence ID" value="AAL13236.1"/>
    <property type="molecule type" value="mRNA"/>
</dbReference>
<dbReference type="EMBL" id="BC120804">
    <property type="protein sequence ID" value="AAI20805.1"/>
    <property type="molecule type" value="mRNA"/>
</dbReference>
<dbReference type="EMBL" id="BC132635">
    <property type="protein sequence ID" value="AAI32636.1"/>
    <property type="molecule type" value="mRNA"/>
</dbReference>
<dbReference type="EMBL" id="BC145088">
    <property type="protein sequence ID" value="AAI45089.1"/>
    <property type="molecule type" value="mRNA"/>
</dbReference>
<dbReference type="CCDS" id="CCDS22078.1"/>
<dbReference type="RefSeq" id="NP_570973.1">
    <property type="nucleotide sequence ID" value="NM_130903.4"/>
</dbReference>
<dbReference type="SMR" id="Q91ZW9"/>
<dbReference type="BioGRID" id="228434">
    <property type="interactions" value="1"/>
</dbReference>
<dbReference type="FunCoup" id="Q91ZW9">
    <property type="interactions" value="400"/>
</dbReference>
<dbReference type="STRING" id="10090.ENSMUSP00000039861"/>
<dbReference type="GlyCosmos" id="Q91ZW9">
    <property type="glycosylation" value="1 site, No reported glycans"/>
</dbReference>
<dbReference type="GlyGen" id="Q91ZW9">
    <property type="glycosylation" value="1 site"/>
</dbReference>
<dbReference type="PaxDb" id="10090-ENSMUSP00000039861"/>
<dbReference type="DNASU" id="170776"/>
<dbReference type="Ensembl" id="ENSMUST00000044060.14">
    <property type="protein sequence ID" value="ENSMUSP00000039861.8"/>
    <property type="gene ID" value="ENSMUSG00000040165.15"/>
</dbReference>
<dbReference type="GeneID" id="170776"/>
<dbReference type="KEGG" id="mmu:170776"/>
<dbReference type="UCSC" id="uc009ksw.1">
    <property type="organism name" value="mouse"/>
</dbReference>
<dbReference type="AGR" id="MGI:2157945"/>
<dbReference type="CTD" id="170776"/>
<dbReference type="MGI" id="MGI:2157945">
    <property type="gene designation" value="Cd209c"/>
</dbReference>
<dbReference type="VEuPathDB" id="HostDB:ENSMUSG00000040165"/>
<dbReference type="eggNOG" id="KOG4297">
    <property type="taxonomic scope" value="Eukaryota"/>
</dbReference>
<dbReference type="GeneTree" id="ENSGT00940000155012"/>
<dbReference type="HOGENOM" id="CLU_049894_7_0_1"/>
<dbReference type="InParanoid" id="Q91ZW9"/>
<dbReference type="OMA" id="YWICKKS"/>
<dbReference type="OrthoDB" id="2142683at2759"/>
<dbReference type="PhylomeDB" id="Q91ZW9"/>
<dbReference type="TreeFam" id="TF333341"/>
<dbReference type="BioGRID-ORCS" id="170776">
    <property type="hits" value="3 hits in 76 CRISPR screens"/>
</dbReference>
<dbReference type="PRO" id="PR:Q91ZW9"/>
<dbReference type="Proteomes" id="UP000000589">
    <property type="component" value="Chromosome 8"/>
</dbReference>
<dbReference type="RNAct" id="Q91ZW9">
    <property type="molecule type" value="protein"/>
</dbReference>
<dbReference type="Bgee" id="ENSMUSG00000040165">
    <property type="expression patterns" value="Expressed in blastoderm cell in morula and 59 other cell types or tissues"/>
</dbReference>
<dbReference type="ExpressionAtlas" id="Q91ZW9">
    <property type="expression patterns" value="baseline and differential"/>
</dbReference>
<dbReference type="GO" id="GO:0005537">
    <property type="term" value="F:D-mannose binding"/>
    <property type="evidence" value="ECO:0000314"/>
    <property type="project" value="MGI"/>
</dbReference>
<dbReference type="GO" id="GO:0046872">
    <property type="term" value="F:metal ion binding"/>
    <property type="evidence" value="ECO:0007669"/>
    <property type="project" value="UniProtKB-KW"/>
</dbReference>
<dbReference type="CDD" id="cd03590">
    <property type="entry name" value="CLECT_DC-SIGN_like"/>
    <property type="match status" value="1"/>
</dbReference>
<dbReference type="FunFam" id="3.10.100.10:FF:000044">
    <property type="entry name" value="CD209 antigen, isoform CRA_b"/>
    <property type="match status" value="1"/>
</dbReference>
<dbReference type="Gene3D" id="3.10.100.10">
    <property type="entry name" value="Mannose-Binding Protein A, subunit A"/>
    <property type="match status" value="1"/>
</dbReference>
<dbReference type="InterPro" id="IPR001304">
    <property type="entry name" value="C-type_lectin-like"/>
</dbReference>
<dbReference type="InterPro" id="IPR016186">
    <property type="entry name" value="C-type_lectin-like/link_sf"/>
</dbReference>
<dbReference type="InterPro" id="IPR050111">
    <property type="entry name" value="C-type_lectin/snaclec_domain"/>
</dbReference>
<dbReference type="InterPro" id="IPR018378">
    <property type="entry name" value="C-type_lectin_CS"/>
</dbReference>
<dbReference type="InterPro" id="IPR033989">
    <property type="entry name" value="CD209-like_CTLD"/>
</dbReference>
<dbReference type="InterPro" id="IPR016187">
    <property type="entry name" value="CTDL_fold"/>
</dbReference>
<dbReference type="PANTHER" id="PTHR22803">
    <property type="entry name" value="MANNOSE, PHOSPHOLIPASE, LECTIN RECEPTOR RELATED"/>
    <property type="match status" value="1"/>
</dbReference>
<dbReference type="Pfam" id="PF00059">
    <property type="entry name" value="Lectin_C"/>
    <property type="match status" value="1"/>
</dbReference>
<dbReference type="SMART" id="SM00034">
    <property type="entry name" value="CLECT"/>
    <property type="match status" value="1"/>
</dbReference>
<dbReference type="SUPFAM" id="SSF56436">
    <property type="entry name" value="C-type lectin-like"/>
    <property type="match status" value="1"/>
</dbReference>
<dbReference type="PROSITE" id="PS00615">
    <property type="entry name" value="C_TYPE_LECTIN_1"/>
    <property type="match status" value="1"/>
</dbReference>
<dbReference type="PROSITE" id="PS50041">
    <property type="entry name" value="C_TYPE_LECTIN_2"/>
    <property type="match status" value="1"/>
</dbReference>
<evidence type="ECO:0000250" key="1"/>
<evidence type="ECO:0000255" key="2"/>
<evidence type="ECO:0000255" key="3">
    <source>
        <dbReference type="PROSITE-ProRule" id="PRU00040"/>
    </source>
</evidence>
<evidence type="ECO:0000305" key="4"/>
<sequence>MRMHTRLQFLKRVSNVAYSHGQEQAKKEKVYKEMTQLKSQINRLCRPCPWDWTVFQGNCYFFSKFQQNWNDSVNACRKLDAQLVVIKSDDEQSFLQQTSKEKGYAWMGLSDLKHEGRWHWVDGSHLLFSFMKYWNKGEPNNEWEEDCAEFRGDGWNDAPCTIKKYWICKKSAMSCTEK</sequence>
<accession>Q91ZW9</accession>
<accession>Q0VB37</accession>